<feature type="chain" id="PRO_1000062039" description="Probable transcriptional regulatory protein Lreu_0552">
    <location>
        <begin position="1"/>
        <end position="248"/>
    </location>
</feature>
<feature type="region of interest" description="Disordered" evidence="2">
    <location>
        <begin position="1"/>
        <end position="22"/>
    </location>
</feature>
<protein>
    <recommendedName>
        <fullName evidence="1">Probable transcriptional regulatory protein Lreu_0552</fullName>
    </recommendedName>
</protein>
<name>Y552_LIMRD</name>
<reference key="1">
    <citation type="journal article" date="2011" name="PLoS Genet.">
        <title>The evolution of host specialization in the vertebrate gut symbiont Lactobacillus reuteri.</title>
        <authorList>
            <person name="Frese S.A."/>
            <person name="Benson A.K."/>
            <person name="Tannock G.W."/>
            <person name="Loach D.M."/>
            <person name="Kim J."/>
            <person name="Zhang M."/>
            <person name="Oh P.L."/>
            <person name="Heng N.C."/>
            <person name="Patil P.B."/>
            <person name="Juge N."/>
            <person name="Mackenzie D.A."/>
            <person name="Pearson B.M."/>
            <person name="Lapidus A."/>
            <person name="Dalin E."/>
            <person name="Tice H."/>
            <person name="Goltsman E."/>
            <person name="Land M."/>
            <person name="Hauser L."/>
            <person name="Ivanova N."/>
            <person name="Kyrpides N.C."/>
            <person name="Walter J."/>
        </authorList>
    </citation>
    <scope>NUCLEOTIDE SEQUENCE [LARGE SCALE GENOMIC DNA]</scope>
    <source>
        <strain>DSM 20016</strain>
    </source>
</reference>
<keyword id="KW-0963">Cytoplasm</keyword>
<keyword id="KW-0238">DNA-binding</keyword>
<keyword id="KW-1185">Reference proteome</keyword>
<keyword id="KW-0804">Transcription</keyword>
<keyword id="KW-0805">Transcription regulation</keyword>
<evidence type="ECO:0000255" key="1">
    <source>
        <dbReference type="HAMAP-Rule" id="MF_00693"/>
    </source>
</evidence>
<evidence type="ECO:0000256" key="2">
    <source>
        <dbReference type="SAM" id="MobiDB-lite"/>
    </source>
</evidence>
<comment type="subcellular location">
    <subcellularLocation>
        <location evidence="1">Cytoplasm</location>
    </subcellularLocation>
</comment>
<comment type="similarity">
    <text evidence="1">Belongs to the TACO1 family.</text>
</comment>
<proteinExistence type="inferred from homology"/>
<sequence>MSGHSKWHNIQGRKNAQDAKRGKIFQKISRDLYQAAKAGDPDPANNAQLRLVIDKAHAANMPKKNIDRAIAKASGIGGAKFEEVTYEGYGPGGVAVMVSALTDNKNRTASAVRSAFSHSGGSLGASGSVSYMFDRKGLIEILRDDLDKSEDDMLMDALDAGAEDMKATEEKFQIFTDPSSMTDVRDALQEQGYELDTAEVTMIPQNRTEVPADKAKQYRHLIDELTENDDVADIYETGILPDEDDDEE</sequence>
<organism>
    <name type="scientific">Limosilactobacillus reuteri (strain DSM 20016)</name>
    <name type="common">Lactobacillus reuteri</name>
    <dbReference type="NCBI Taxonomy" id="557436"/>
    <lineage>
        <taxon>Bacteria</taxon>
        <taxon>Bacillati</taxon>
        <taxon>Bacillota</taxon>
        <taxon>Bacilli</taxon>
        <taxon>Lactobacillales</taxon>
        <taxon>Lactobacillaceae</taxon>
        <taxon>Limosilactobacillus</taxon>
    </lineage>
</organism>
<dbReference type="EMBL" id="CP000705">
    <property type="protein sequence ID" value="ABQ82820.1"/>
    <property type="molecule type" value="Genomic_DNA"/>
</dbReference>
<dbReference type="RefSeq" id="WP_003667655.1">
    <property type="nucleotide sequence ID" value="NZ_AZDD01000007.1"/>
</dbReference>
<dbReference type="SMR" id="A5VIZ6"/>
<dbReference type="STRING" id="557436.Lreu_0552"/>
<dbReference type="KEGG" id="lre:Lreu_0552"/>
<dbReference type="PATRIC" id="fig|557436.17.peg.1832"/>
<dbReference type="eggNOG" id="COG0217">
    <property type="taxonomic scope" value="Bacteria"/>
</dbReference>
<dbReference type="HOGENOM" id="CLU_062974_3_0_9"/>
<dbReference type="Proteomes" id="UP000001991">
    <property type="component" value="Chromosome"/>
</dbReference>
<dbReference type="GO" id="GO:0005829">
    <property type="term" value="C:cytosol"/>
    <property type="evidence" value="ECO:0007669"/>
    <property type="project" value="TreeGrafter"/>
</dbReference>
<dbReference type="GO" id="GO:0003677">
    <property type="term" value="F:DNA binding"/>
    <property type="evidence" value="ECO:0007669"/>
    <property type="project" value="UniProtKB-UniRule"/>
</dbReference>
<dbReference type="GO" id="GO:0006355">
    <property type="term" value="P:regulation of DNA-templated transcription"/>
    <property type="evidence" value="ECO:0007669"/>
    <property type="project" value="UniProtKB-UniRule"/>
</dbReference>
<dbReference type="FunFam" id="1.10.10.200:FF:000002">
    <property type="entry name" value="Probable transcriptional regulatory protein CLM62_37755"/>
    <property type="match status" value="1"/>
</dbReference>
<dbReference type="FunFam" id="3.30.70.980:FF:000002">
    <property type="entry name" value="Probable transcriptional regulatory protein YebC"/>
    <property type="match status" value="1"/>
</dbReference>
<dbReference type="Gene3D" id="1.10.10.200">
    <property type="match status" value="1"/>
</dbReference>
<dbReference type="Gene3D" id="3.30.70.980">
    <property type="match status" value="2"/>
</dbReference>
<dbReference type="HAMAP" id="MF_00693">
    <property type="entry name" value="Transcrip_reg_TACO1"/>
    <property type="match status" value="1"/>
</dbReference>
<dbReference type="InterPro" id="IPR017856">
    <property type="entry name" value="Integrase-like_N"/>
</dbReference>
<dbReference type="InterPro" id="IPR048300">
    <property type="entry name" value="TACO1_YebC-like_2nd/3rd_dom"/>
</dbReference>
<dbReference type="InterPro" id="IPR049083">
    <property type="entry name" value="TACO1_YebC_N"/>
</dbReference>
<dbReference type="InterPro" id="IPR002876">
    <property type="entry name" value="Transcrip_reg_TACO1-like"/>
</dbReference>
<dbReference type="InterPro" id="IPR026564">
    <property type="entry name" value="Transcrip_reg_TACO1-like_dom3"/>
</dbReference>
<dbReference type="InterPro" id="IPR029072">
    <property type="entry name" value="YebC-like"/>
</dbReference>
<dbReference type="NCBIfam" id="NF001030">
    <property type="entry name" value="PRK00110.1"/>
    <property type="match status" value="1"/>
</dbReference>
<dbReference type="NCBIfam" id="NF009044">
    <property type="entry name" value="PRK12378.1"/>
    <property type="match status" value="1"/>
</dbReference>
<dbReference type="NCBIfam" id="TIGR01033">
    <property type="entry name" value="YebC/PmpR family DNA-binding transcriptional regulator"/>
    <property type="match status" value="1"/>
</dbReference>
<dbReference type="PANTHER" id="PTHR12532:SF6">
    <property type="entry name" value="TRANSCRIPTIONAL REGULATORY PROTEIN YEBC-RELATED"/>
    <property type="match status" value="1"/>
</dbReference>
<dbReference type="PANTHER" id="PTHR12532">
    <property type="entry name" value="TRANSLATIONAL ACTIVATOR OF CYTOCHROME C OXIDASE 1"/>
    <property type="match status" value="1"/>
</dbReference>
<dbReference type="Pfam" id="PF20772">
    <property type="entry name" value="TACO1_YebC_N"/>
    <property type="match status" value="1"/>
</dbReference>
<dbReference type="Pfam" id="PF01709">
    <property type="entry name" value="Transcrip_reg"/>
    <property type="match status" value="1"/>
</dbReference>
<dbReference type="SUPFAM" id="SSF75625">
    <property type="entry name" value="YebC-like"/>
    <property type="match status" value="1"/>
</dbReference>
<accession>A5VIZ6</accession>
<gene>
    <name type="ordered locus">Lreu_0552</name>
</gene>